<protein>
    <recommendedName>
        <fullName evidence="1">Chaperone protein HscA homolog</fullName>
    </recommendedName>
</protein>
<proteinExistence type="inferred from homology"/>
<name>HSCA_SHEFN</name>
<sequence>MALLQIAEPGQSAAPHQHRLAVGIDLGTTNSLVAAVRSAQALTLPDEQGRHSLPSVVHYGETNVLVGYEAQDKSALDPQNTIVSVKRFMGRSLTDIQSGVHRLPYELHASENGLPVFTTPMGQVNPIQVSAEILKPLIARAETTLGGELAGVVITVPAYFDDAQRQGTKDAAELLGVKVLRLLNEPTAAAIAYGLDSKQEGVIAIYDLGGGTFDISVLRLNRGVFEVLATGGDSALGGDDFDHLLVSHLQQAWQITEPGSQLARQLLIEARRVKEALTDNDSVEASVVMADKTLTCTVDKSLFNELIGALVKKTIGCCRRTLRDAGVSVDDVIETVMVGGSTRVPLVREQVETFFKKTPLTSIDPDRVVAIGAAIQADILVGNKPESDLLLLDVIPLSLGVETMGGLVEKVVTRNTTIPVARAQEFTTFKDGQTAMAFHVVQGERELVEDCRSLARFTLHGIPPLAAGAAHIRVTFQVDADGLLSVTAMEKSTGVNTSIQVKPSFGLSDTEIATMLKDSMKYAKDDITRRMLAEQKVEAARVIESLNAALAKDAALLDEQEREELVVAIAQLDAVAQQDNIDAIEKAIANLDDKTQDFASRRMDNSIRAALKGQSVDNI</sequence>
<evidence type="ECO:0000255" key="1">
    <source>
        <dbReference type="HAMAP-Rule" id="MF_00679"/>
    </source>
</evidence>
<accession>Q080Q0</accession>
<comment type="function">
    <text evidence="1">Chaperone involved in the maturation of iron-sulfur cluster-containing proteins. Has a low intrinsic ATPase activity which is markedly stimulated by HscB.</text>
</comment>
<comment type="similarity">
    <text evidence="1">Belongs to the heat shock protein 70 family.</text>
</comment>
<keyword id="KW-0067">ATP-binding</keyword>
<keyword id="KW-0143">Chaperone</keyword>
<keyword id="KW-0547">Nucleotide-binding</keyword>
<keyword id="KW-1185">Reference proteome</keyword>
<reference key="1">
    <citation type="submission" date="2006-08" db="EMBL/GenBank/DDBJ databases">
        <title>Complete sequence of Shewanella frigidimarina NCIMB 400.</title>
        <authorList>
            <consortium name="US DOE Joint Genome Institute"/>
            <person name="Copeland A."/>
            <person name="Lucas S."/>
            <person name="Lapidus A."/>
            <person name="Barry K."/>
            <person name="Detter J.C."/>
            <person name="Glavina del Rio T."/>
            <person name="Hammon N."/>
            <person name="Israni S."/>
            <person name="Dalin E."/>
            <person name="Tice H."/>
            <person name="Pitluck S."/>
            <person name="Fredrickson J.K."/>
            <person name="Kolker E."/>
            <person name="McCuel L.A."/>
            <person name="DiChristina T."/>
            <person name="Nealson K.H."/>
            <person name="Newman D."/>
            <person name="Tiedje J.M."/>
            <person name="Zhou J."/>
            <person name="Romine M.F."/>
            <person name="Culley D.E."/>
            <person name="Serres M."/>
            <person name="Chertkov O."/>
            <person name="Brettin T."/>
            <person name="Bruce D."/>
            <person name="Han C."/>
            <person name="Tapia R."/>
            <person name="Gilna P."/>
            <person name="Schmutz J."/>
            <person name="Larimer F."/>
            <person name="Land M."/>
            <person name="Hauser L."/>
            <person name="Kyrpides N."/>
            <person name="Mikhailova N."/>
            <person name="Richardson P."/>
        </authorList>
    </citation>
    <scope>NUCLEOTIDE SEQUENCE [LARGE SCALE GENOMIC DNA]</scope>
    <source>
        <strain>NCIMB 400</strain>
    </source>
</reference>
<organism>
    <name type="scientific">Shewanella frigidimarina (strain NCIMB 400)</name>
    <dbReference type="NCBI Taxonomy" id="318167"/>
    <lineage>
        <taxon>Bacteria</taxon>
        <taxon>Pseudomonadati</taxon>
        <taxon>Pseudomonadota</taxon>
        <taxon>Gammaproteobacteria</taxon>
        <taxon>Alteromonadales</taxon>
        <taxon>Shewanellaceae</taxon>
        <taxon>Shewanella</taxon>
    </lineage>
</organism>
<dbReference type="EMBL" id="CP000447">
    <property type="protein sequence ID" value="ABI72265.1"/>
    <property type="molecule type" value="Genomic_DNA"/>
</dbReference>
<dbReference type="RefSeq" id="WP_011637874.1">
    <property type="nucleotide sequence ID" value="NC_008345.1"/>
</dbReference>
<dbReference type="SMR" id="Q080Q0"/>
<dbReference type="STRING" id="318167.Sfri_2420"/>
<dbReference type="KEGG" id="sfr:Sfri_2420"/>
<dbReference type="eggNOG" id="COG0443">
    <property type="taxonomic scope" value="Bacteria"/>
</dbReference>
<dbReference type="HOGENOM" id="CLU_005965_2_1_6"/>
<dbReference type="OrthoDB" id="9766019at2"/>
<dbReference type="Proteomes" id="UP000000684">
    <property type="component" value="Chromosome"/>
</dbReference>
<dbReference type="GO" id="GO:0005524">
    <property type="term" value="F:ATP binding"/>
    <property type="evidence" value="ECO:0007669"/>
    <property type="project" value="UniProtKB-KW"/>
</dbReference>
<dbReference type="GO" id="GO:0016887">
    <property type="term" value="F:ATP hydrolysis activity"/>
    <property type="evidence" value="ECO:0007669"/>
    <property type="project" value="UniProtKB-UniRule"/>
</dbReference>
<dbReference type="GO" id="GO:0140662">
    <property type="term" value="F:ATP-dependent protein folding chaperone"/>
    <property type="evidence" value="ECO:0007669"/>
    <property type="project" value="InterPro"/>
</dbReference>
<dbReference type="GO" id="GO:0051082">
    <property type="term" value="F:unfolded protein binding"/>
    <property type="evidence" value="ECO:0007669"/>
    <property type="project" value="InterPro"/>
</dbReference>
<dbReference type="GO" id="GO:0016226">
    <property type="term" value="P:iron-sulfur cluster assembly"/>
    <property type="evidence" value="ECO:0007669"/>
    <property type="project" value="InterPro"/>
</dbReference>
<dbReference type="CDD" id="cd10236">
    <property type="entry name" value="ASKHA_NBD_HSP70_HscA"/>
    <property type="match status" value="1"/>
</dbReference>
<dbReference type="FunFam" id="3.30.420.40:FF:000046">
    <property type="entry name" value="Chaperone protein HscA"/>
    <property type="match status" value="1"/>
</dbReference>
<dbReference type="FunFam" id="2.60.34.10:FF:000005">
    <property type="entry name" value="Chaperone protein HscA homolog"/>
    <property type="match status" value="1"/>
</dbReference>
<dbReference type="Gene3D" id="1.20.1270.10">
    <property type="match status" value="1"/>
</dbReference>
<dbReference type="Gene3D" id="3.30.420.40">
    <property type="match status" value="2"/>
</dbReference>
<dbReference type="Gene3D" id="3.90.640.10">
    <property type="entry name" value="Actin, Chain A, domain 4"/>
    <property type="match status" value="1"/>
</dbReference>
<dbReference type="Gene3D" id="2.60.34.10">
    <property type="entry name" value="Substrate Binding Domain Of DNAk, Chain A, domain 1"/>
    <property type="match status" value="1"/>
</dbReference>
<dbReference type="HAMAP" id="MF_00679">
    <property type="entry name" value="HscA"/>
    <property type="match status" value="1"/>
</dbReference>
<dbReference type="InterPro" id="IPR043129">
    <property type="entry name" value="ATPase_NBD"/>
</dbReference>
<dbReference type="InterPro" id="IPR018181">
    <property type="entry name" value="Heat_shock_70_CS"/>
</dbReference>
<dbReference type="InterPro" id="IPR042039">
    <property type="entry name" value="HscA_NBD"/>
</dbReference>
<dbReference type="InterPro" id="IPR029048">
    <property type="entry name" value="HSP70_C_sf"/>
</dbReference>
<dbReference type="InterPro" id="IPR029047">
    <property type="entry name" value="HSP70_peptide-bd_sf"/>
</dbReference>
<dbReference type="InterPro" id="IPR013126">
    <property type="entry name" value="Hsp_70_fam"/>
</dbReference>
<dbReference type="InterPro" id="IPR010236">
    <property type="entry name" value="ISC_FeS_clus_asmbl_HscA"/>
</dbReference>
<dbReference type="NCBIfam" id="TIGR01991">
    <property type="entry name" value="HscA"/>
    <property type="match status" value="1"/>
</dbReference>
<dbReference type="NCBIfam" id="NF003520">
    <property type="entry name" value="PRK05183.1"/>
    <property type="match status" value="1"/>
</dbReference>
<dbReference type="PANTHER" id="PTHR19375">
    <property type="entry name" value="HEAT SHOCK PROTEIN 70KDA"/>
    <property type="match status" value="1"/>
</dbReference>
<dbReference type="Pfam" id="PF00012">
    <property type="entry name" value="HSP70"/>
    <property type="match status" value="1"/>
</dbReference>
<dbReference type="PRINTS" id="PR00301">
    <property type="entry name" value="HEATSHOCK70"/>
</dbReference>
<dbReference type="SUPFAM" id="SSF53067">
    <property type="entry name" value="Actin-like ATPase domain"/>
    <property type="match status" value="2"/>
</dbReference>
<dbReference type="SUPFAM" id="SSF100934">
    <property type="entry name" value="Heat shock protein 70kD (HSP70), C-terminal subdomain"/>
    <property type="match status" value="1"/>
</dbReference>
<dbReference type="SUPFAM" id="SSF100920">
    <property type="entry name" value="Heat shock protein 70kD (HSP70), peptide-binding domain"/>
    <property type="match status" value="1"/>
</dbReference>
<dbReference type="PROSITE" id="PS00297">
    <property type="entry name" value="HSP70_1"/>
    <property type="match status" value="1"/>
</dbReference>
<dbReference type="PROSITE" id="PS00329">
    <property type="entry name" value="HSP70_2"/>
    <property type="match status" value="1"/>
</dbReference>
<gene>
    <name evidence="1" type="primary">hscA</name>
    <name type="ordered locus">Sfri_2420</name>
</gene>
<feature type="chain" id="PRO_1000044888" description="Chaperone protein HscA homolog">
    <location>
        <begin position="1"/>
        <end position="619"/>
    </location>
</feature>